<sequence>MASKRRNMSCSERHQKLVDENYCKKLHVQALKNINSQIRNRMVQNENDNRVERKQFLRLLQNEQFELDMEEAIQKAEENKRLKELLLKQEEKLAMELAKLKHESLKDEKMRQQVRENSIELRELEKKLKAAYMNKERAAQIAEKDAIKYEQMKRDAEIAKTMMEEHKRIIKEENAAEDKRNKVKAQYYLDLEKQLEEQEKKKQEAYEQLLKEKLMIDEIVRKIYEEDRLEKQQKLEKMNAMRRYIEEFQKEQALWRKKKREEMEEENRKIIEFANMQQQREEDRMAKVQENEEKRLQLQNALTQKLEEMLRQREDLEQVQQELYQEEQAEIYKRKLKEEAEKKLRKQKEMKQDFEEQMALKELVLQAAKEEEENFRKTMLAKFAEDDRIELMNAQKQRMKQLEHRRAVEKLIEERRQQFLADKQQELEEWQLQQRRQGFINAIIEEERLKLLKEHATNLLGYLPKGVFKKEDDIDLLGEEFRKVYQQRSEICEDK</sequence>
<gene>
    <name type="primary">MNS1</name>
    <name type="ORF">QtsA-14410</name>
</gene>
<comment type="function">
    <text evidence="2 3">Microtubule inner protein (MIP) part of the dynein-decorated doublet microtubules (DMTs) in cilia axoneme, which is required for motile cilia beating (By similarity). May play a role in the control of meiotic division and germ cell differentiation through regulation of pairing and recombination during meiosis (By similarity). Required for sperm flagella assembly (By similarity). May play a role in the assembly and function of the outer dynein arm-docking complex (ODA-DC). ODA-DC mediates outer dynein arms (ODA) binding onto the axonemal doublet microtubules (By similarity).</text>
</comment>
<comment type="subunit">
    <text evidence="2 3">Able to form oligomers. Microtubule inner protein component of sperm flagellar doublet microtubules (By similarity). Interacts with ODAD1 (By similarity). Interacts with BBOF1 (By similarity).</text>
</comment>
<comment type="subcellular location">
    <subcellularLocation>
        <location evidence="2">Nucleus</location>
    </subcellularLocation>
    <subcellularLocation>
        <location evidence="1">Cytoplasm</location>
        <location evidence="1">Cytoskeleton</location>
        <location evidence="1">Cilium axoneme</location>
    </subcellularLocation>
    <subcellularLocation>
        <location evidence="3">Cytoplasm</location>
        <location evidence="3">Cytoskeleton</location>
        <location evidence="3">Flagellum axoneme</location>
    </subcellularLocation>
    <text evidence="1">Microtubule inner protein (MIP) part of the dynein-decorated doublet microtubules (DMTs) in cilia axoneme.</text>
</comment>
<comment type="similarity">
    <text evidence="5">Belongs to the MNS1 family.</text>
</comment>
<comment type="sequence caution" evidence="5">
    <conflict type="erroneous initiation">
        <sequence resource="EMBL-CDS" id="BAE00834"/>
    </conflict>
    <text>Truncated N-terminus.</text>
</comment>
<comment type="sequence caution" evidence="5">
    <conflict type="frameshift">
        <sequence resource="EMBL-CDS" id="BAE00834"/>
    </conflict>
</comment>
<reference key="1">
    <citation type="submission" date="2005-06" db="EMBL/GenBank/DDBJ databases">
        <title>DNA sequences of macaque genes expressed in brain or testis and its evolutionary implications.</title>
        <authorList>
            <consortium name="International consortium for macaque cDNA sequencing and analysis"/>
        </authorList>
    </citation>
    <scope>NUCLEOTIDE SEQUENCE [LARGE SCALE MRNA]</scope>
    <source>
        <tissue>Testis</tissue>
    </source>
</reference>
<evidence type="ECO:0000250" key="1">
    <source>
        <dbReference type="UniProtKB" id="Q2KIQ2"/>
    </source>
</evidence>
<evidence type="ECO:0000250" key="2">
    <source>
        <dbReference type="UniProtKB" id="Q61884"/>
    </source>
</evidence>
<evidence type="ECO:0000250" key="3">
    <source>
        <dbReference type="UniProtKB" id="Q8NEH6"/>
    </source>
</evidence>
<evidence type="ECO:0000255" key="4"/>
<evidence type="ECO:0000305" key="5"/>
<organism>
    <name type="scientific">Macaca fascicularis</name>
    <name type="common">Crab-eating macaque</name>
    <name type="synonym">Cynomolgus monkey</name>
    <dbReference type="NCBI Taxonomy" id="9541"/>
    <lineage>
        <taxon>Eukaryota</taxon>
        <taxon>Metazoa</taxon>
        <taxon>Chordata</taxon>
        <taxon>Craniata</taxon>
        <taxon>Vertebrata</taxon>
        <taxon>Euteleostomi</taxon>
        <taxon>Mammalia</taxon>
        <taxon>Eutheria</taxon>
        <taxon>Euarchontoglires</taxon>
        <taxon>Primates</taxon>
        <taxon>Haplorrhini</taxon>
        <taxon>Catarrhini</taxon>
        <taxon>Cercopithecidae</taxon>
        <taxon>Cercopithecinae</taxon>
        <taxon>Macaca</taxon>
    </lineage>
</organism>
<accession>Q4R7T8</accession>
<keyword id="KW-0966">Cell projection</keyword>
<keyword id="KW-0969">Cilium</keyword>
<keyword id="KW-0175">Coiled coil</keyword>
<keyword id="KW-0963">Cytoplasm</keyword>
<keyword id="KW-0206">Cytoskeleton</keyword>
<keyword id="KW-0282">Flagellum</keyword>
<keyword id="KW-0469">Meiosis</keyword>
<keyword id="KW-0539">Nucleus</keyword>
<keyword id="KW-0597">Phosphoprotein</keyword>
<keyword id="KW-1185">Reference proteome</keyword>
<dbReference type="EMBL" id="AB168724">
    <property type="protein sequence ID" value="BAE00834.1"/>
    <property type="status" value="ALT_SEQ"/>
    <property type="molecule type" value="mRNA"/>
</dbReference>
<dbReference type="SMR" id="Q4R7T8"/>
<dbReference type="STRING" id="9541.ENSMFAP00000012972"/>
<dbReference type="eggNOG" id="ENOG502QS9D">
    <property type="taxonomic scope" value="Eukaryota"/>
</dbReference>
<dbReference type="Proteomes" id="UP000233100">
    <property type="component" value="Unplaced"/>
</dbReference>
<dbReference type="GO" id="GO:0160111">
    <property type="term" value="C:axonemal A tubule inner sheath"/>
    <property type="evidence" value="ECO:0000250"/>
    <property type="project" value="UniProtKB"/>
</dbReference>
<dbReference type="GO" id="GO:0005879">
    <property type="term" value="C:axonemal microtubule"/>
    <property type="evidence" value="ECO:0000250"/>
    <property type="project" value="UniProtKB"/>
</dbReference>
<dbReference type="GO" id="GO:0005930">
    <property type="term" value="C:axoneme"/>
    <property type="evidence" value="ECO:0000250"/>
    <property type="project" value="UniProtKB"/>
</dbReference>
<dbReference type="GO" id="GO:0005634">
    <property type="term" value="C:nucleus"/>
    <property type="evidence" value="ECO:0007669"/>
    <property type="project" value="UniProtKB-SubCell"/>
</dbReference>
<dbReference type="GO" id="GO:0036126">
    <property type="term" value="C:sperm flagellum"/>
    <property type="evidence" value="ECO:0000250"/>
    <property type="project" value="UniProtKB"/>
</dbReference>
<dbReference type="GO" id="GO:0044782">
    <property type="term" value="P:cilium organization"/>
    <property type="evidence" value="ECO:0007669"/>
    <property type="project" value="TreeGrafter"/>
</dbReference>
<dbReference type="GO" id="GO:0030317">
    <property type="term" value="P:flagellated sperm motility"/>
    <property type="evidence" value="ECO:0000250"/>
    <property type="project" value="UniProtKB"/>
</dbReference>
<dbReference type="GO" id="GO:0051321">
    <property type="term" value="P:meiotic cell cycle"/>
    <property type="evidence" value="ECO:0007669"/>
    <property type="project" value="UniProtKB-KW"/>
</dbReference>
<dbReference type="InterPro" id="IPR026504">
    <property type="entry name" value="MNS1"/>
</dbReference>
<dbReference type="InterPro" id="IPR043597">
    <property type="entry name" value="TPH_dom"/>
</dbReference>
<dbReference type="PANTHER" id="PTHR19265">
    <property type="entry name" value="MEIOSIS-SPECIFIC NUCLEAR STRUCTURAL PROTEIN 1"/>
    <property type="match status" value="1"/>
</dbReference>
<dbReference type="PANTHER" id="PTHR19265:SF0">
    <property type="entry name" value="MEIOSIS-SPECIFIC NUCLEAR STRUCTURAL PROTEIN 1"/>
    <property type="match status" value="1"/>
</dbReference>
<dbReference type="Pfam" id="PF13868">
    <property type="entry name" value="TPH"/>
    <property type="match status" value="1"/>
</dbReference>
<name>MNS1_MACFA</name>
<protein>
    <recommendedName>
        <fullName>Meiosis-specific nuclear structural protein 1</fullName>
    </recommendedName>
</protein>
<proteinExistence type="evidence at transcript level"/>
<feature type="chain" id="PRO_0000298922" description="Meiosis-specific nuclear structural protein 1">
    <location>
        <begin position="1"/>
        <end position="495"/>
    </location>
</feature>
<feature type="region of interest" description="Interaction with BBOF1" evidence="2">
    <location>
        <begin position="1"/>
        <end position="314"/>
    </location>
</feature>
<feature type="coiled-coil region" evidence="4">
    <location>
        <begin position="59"/>
        <end position="410"/>
    </location>
</feature>
<feature type="modified residue" description="Phosphotyrosine" evidence="2">
    <location>
        <position position="188"/>
    </location>
</feature>